<dbReference type="EC" id="4.4.1.21" evidence="1"/>
<dbReference type="EMBL" id="AP006627">
    <property type="protein sequence ID" value="BAD65449.1"/>
    <property type="molecule type" value="Genomic_DNA"/>
</dbReference>
<dbReference type="RefSeq" id="WP_011247757.1">
    <property type="nucleotide sequence ID" value="NC_006582.1"/>
</dbReference>
<dbReference type="SMR" id="Q5WDW1"/>
<dbReference type="STRING" id="66692.ABC2915"/>
<dbReference type="KEGG" id="bcl:ABC2915"/>
<dbReference type="eggNOG" id="COG1854">
    <property type="taxonomic scope" value="Bacteria"/>
</dbReference>
<dbReference type="HOGENOM" id="CLU_107531_2_0_9"/>
<dbReference type="OrthoDB" id="9788129at2"/>
<dbReference type="BRENDA" id="4.4.1.21">
    <property type="organism ID" value="7525"/>
</dbReference>
<dbReference type="Proteomes" id="UP000001168">
    <property type="component" value="Chromosome"/>
</dbReference>
<dbReference type="GO" id="GO:0005506">
    <property type="term" value="F:iron ion binding"/>
    <property type="evidence" value="ECO:0007669"/>
    <property type="project" value="InterPro"/>
</dbReference>
<dbReference type="GO" id="GO:0043768">
    <property type="term" value="F:S-ribosylhomocysteine lyase activity"/>
    <property type="evidence" value="ECO:0007669"/>
    <property type="project" value="UniProtKB-UniRule"/>
</dbReference>
<dbReference type="GO" id="GO:0009372">
    <property type="term" value="P:quorum sensing"/>
    <property type="evidence" value="ECO:0007669"/>
    <property type="project" value="UniProtKB-UniRule"/>
</dbReference>
<dbReference type="Gene3D" id="3.30.1360.80">
    <property type="entry name" value="S-ribosylhomocysteinase (LuxS)"/>
    <property type="match status" value="1"/>
</dbReference>
<dbReference type="HAMAP" id="MF_00091">
    <property type="entry name" value="LuxS"/>
    <property type="match status" value="1"/>
</dbReference>
<dbReference type="InterPro" id="IPR037005">
    <property type="entry name" value="LuxS_sf"/>
</dbReference>
<dbReference type="InterPro" id="IPR011249">
    <property type="entry name" value="Metalloenz_LuxS/M16"/>
</dbReference>
<dbReference type="InterPro" id="IPR003815">
    <property type="entry name" value="S-ribosylhomocysteinase"/>
</dbReference>
<dbReference type="NCBIfam" id="NF002603">
    <property type="entry name" value="PRK02260.1-3"/>
    <property type="match status" value="1"/>
</dbReference>
<dbReference type="PANTHER" id="PTHR35799">
    <property type="entry name" value="S-RIBOSYLHOMOCYSTEINE LYASE"/>
    <property type="match status" value="1"/>
</dbReference>
<dbReference type="PANTHER" id="PTHR35799:SF1">
    <property type="entry name" value="S-RIBOSYLHOMOCYSTEINE LYASE"/>
    <property type="match status" value="1"/>
</dbReference>
<dbReference type="Pfam" id="PF02664">
    <property type="entry name" value="LuxS"/>
    <property type="match status" value="1"/>
</dbReference>
<dbReference type="PIRSF" id="PIRSF006160">
    <property type="entry name" value="AI2"/>
    <property type="match status" value="1"/>
</dbReference>
<dbReference type="PRINTS" id="PR01487">
    <property type="entry name" value="LUXSPROTEIN"/>
</dbReference>
<dbReference type="SUPFAM" id="SSF63411">
    <property type="entry name" value="LuxS/MPP-like metallohydrolase"/>
    <property type="match status" value="1"/>
</dbReference>
<organism>
    <name type="scientific">Shouchella clausii (strain KSM-K16)</name>
    <name type="common">Alkalihalobacillus clausii</name>
    <dbReference type="NCBI Taxonomy" id="66692"/>
    <lineage>
        <taxon>Bacteria</taxon>
        <taxon>Bacillati</taxon>
        <taxon>Bacillota</taxon>
        <taxon>Bacilli</taxon>
        <taxon>Bacillales</taxon>
        <taxon>Bacillaceae</taxon>
        <taxon>Shouchella</taxon>
    </lineage>
</organism>
<gene>
    <name evidence="1" type="primary">luxS</name>
    <name type="ordered locus">ABC2915</name>
</gene>
<feature type="chain" id="PRO_0000172210" description="S-ribosylhomocysteine lyase">
    <location>
        <begin position="1"/>
        <end position="156"/>
    </location>
</feature>
<feature type="binding site" evidence="1">
    <location>
        <position position="54"/>
    </location>
    <ligand>
        <name>Fe cation</name>
        <dbReference type="ChEBI" id="CHEBI:24875"/>
    </ligand>
</feature>
<feature type="binding site" evidence="1">
    <location>
        <position position="58"/>
    </location>
    <ligand>
        <name>Fe cation</name>
        <dbReference type="ChEBI" id="CHEBI:24875"/>
    </ligand>
</feature>
<feature type="binding site" evidence="1">
    <location>
        <position position="126"/>
    </location>
    <ligand>
        <name>Fe cation</name>
        <dbReference type="ChEBI" id="CHEBI:24875"/>
    </ligand>
</feature>
<protein>
    <recommendedName>
        <fullName evidence="1">S-ribosylhomocysteine lyase</fullName>
        <ecNumber evidence="1">4.4.1.21</ecNumber>
    </recommendedName>
    <alternativeName>
        <fullName evidence="1">AI-2 synthesis protein</fullName>
    </alternativeName>
    <alternativeName>
        <fullName evidence="1">Autoinducer-2 production protein LuxS</fullName>
    </alternativeName>
</protein>
<proteinExistence type="inferred from homology"/>
<reference key="1">
    <citation type="submission" date="2003-10" db="EMBL/GenBank/DDBJ databases">
        <title>The complete genome sequence of the alkaliphilic Bacillus clausii KSM-K16.</title>
        <authorList>
            <person name="Takaki Y."/>
            <person name="Kageyama Y."/>
            <person name="Shimamura S."/>
            <person name="Suzuki H."/>
            <person name="Nishi S."/>
            <person name="Hatada Y."/>
            <person name="Kawai S."/>
            <person name="Ito S."/>
            <person name="Horikoshi K."/>
        </authorList>
    </citation>
    <scope>NUCLEOTIDE SEQUENCE [LARGE SCALE GENOMIC DNA]</scope>
    <source>
        <strain>KSM-K16</strain>
    </source>
</reference>
<comment type="function">
    <text evidence="1">Involved in the synthesis of autoinducer 2 (AI-2) which is secreted by bacteria and is used to communicate both the cell density and the metabolic potential of the environment. The regulation of gene expression in response to changes in cell density is called quorum sensing. Catalyzes the transformation of S-ribosylhomocysteine (RHC) to homocysteine (HC) and 4,5-dihydroxy-2,3-pentadione (DPD).</text>
</comment>
<comment type="catalytic activity">
    <reaction evidence="1">
        <text>S-(5-deoxy-D-ribos-5-yl)-L-homocysteine = (S)-4,5-dihydroxypentane-2,3-dione + L-homocysteine</text>
        <dbReference type="Rhea" id="RHEA:17753"/>
        <dbReference type="ChEBI" id="CHEBI:29484"/>
        <dbReference type="ChEBI" id="CHEBI:58195"/>
        <dbReference type="ChEBI" id="CHEBI:58199"/>
        <dbReference type="EC" id="4.4.1.21"/>
    </reaction>
</comment>
<comment type="cofactor">
    <cofactor evidence="1">
        <name>Fe cation</name>
        <dbReference type="ChEBI" id="CHEBI:24875"/>
    </cofactor>
    <text evidence="1">Binds 1 Fe cation per subunit.</text>
</comment>
<comment type="subunit">
    <text evidence="1">Homodimer.</text>
</comment>
<comment type="similarity">
    <text evidence="1">Belongs to the LuxS family.</text>
</comment>
<sequence length="156" mass="17629">MPSVESFELDHTIVKAPYVRHCGKHKIGSDGEVNKFDIRFCQPNKEALKPGVIHTLEHLLAINIRRFSEEYDHFDVIDISPMGCQTGYYLIMSGTPSVEEIIDVLEKTMTYSLSIETVPAATEKECGQAALHDLEGTKEVMRKWLSEDKGSLKQVF</sequence>
<evidence type="ECO:0000255" key="1">
    <source>
        <dbReference type="HAMAP-Rule" id="MF_00091"/>
    </source>
</evidence>
<accession>Q5WDW1</accession>
<keyword id="KW-0071">Autoinducer synthesis</keyword>
<keyword id="KW-0408">Iron</keyword>
<keyword id="KW-0456">Lyase</keyword>
<keyword id="KW-0479">Metal-binding</keyword>
<keyword id="KW-0673">Quorum sensing</keyword>
<keyword id="KW-1185">Reference proteome</keyword>
<name>LUXS_SHOC1</name>